<organism>
    <name type="scientific">Saccharolobus islandicus (strain Y.N.15.51 / Yellowstone #2)</name>
    <name type="common">Sulfolobus islandicus</name>
    <dbReference type="NCBI Taxonomy" id="419942"/>
    <lineage>
        <taxon>Archaea</taxon>
        <taxon>Thermoproteota</taxon>
        <taxon>Thermoprotei</taxon>
        <taxon>Sulfolobales</taxon>
        <taxon>Sulfolobaceae</taxon>
        <taxon>Saccharolobus</taxon>
    </lineage>
</organism>
<keyword id="KW-0067">ATP-binding</keyword>
<keyword id="KW-0963">Cytoplasm</keyword>
<keyword id="KW-0418">Kinase</keyword>
<keyword id="KW-0547">Nucleotide-binding</keyword>
<keyword id="KW-0665">Pyrimidine biosynthesis</keyword>
<keyword id="KW-0808">Transferase</keyword>
<protein>
    <recommendedName>
        <fullName evidence="1">Uridylate kinase</fullName>
        <shortName evidence="1">UK</shortName>
        <ecNumber evidence="1">2.7.4.22</ecNumber>
    </recommendedName>
    <alternativeName>
        <fullName evidence="1">Uridine monophosphate kinase</fullName>
        <shortName evidence="1">UMP kinase</shortName>
        <shortName evidence="1">UMPK</shortName>
    </alternativeName>
</protein>
<gene>
    <name evidence="1" type="primary">pyrH</name>
    <name type="ordered locus">YN1551_1616</name>
</gene>
<dbReference type="EC" id="2.7.4.22" evidence="1"/>
<dbReference type="EMBL" id="CP001404">
    <property type="protein sequence ID" value="ACP48704.1"/>
    <property type="molecule type" value="Genomic_DNA"/>
</dbReference>
<dbReference type="RefSeq" id="WP_012711255.1">
    <property type="nucleotide sequence ID" value="NC_012623.1"/>
</dbReference>
<dbReference type="SMR" id="C3NHU4"/>
<dbReference type="GeneID" id="84061562"/>
<dbReference type="KEGG" id="sin:YN1551_1616"/>
<dbReference type="HOGENOM" id="CLU_079546_0_0_2"/>
<dbReference type="UniPathway" id="UPA00159">
    <property type="reaction ID" value="UER00275"/>
</dbReference>
<dbReference type="Proteomes" id="UP000006818">
    <property type="component" value="Chromosome"/>
</dbReference>
<dbReference type="GO" id="GO:0005737">
    <property type="term" value="C:cytoplasm"/>
    <property type="evidence" value="ECO:0007669"/>
    <property type="project" value="UniProtKB-SubCell"/>
</dbReference>
<dbReference type="GO" id="GO:0005524">
    <property type="term" value="F:ATP binding"/>
    <property type="evidence" value="ECO:0007669"/>
    <property type="project" value="UniProtKB-KW"/>
</dbReference>
<dbReference type="GO" id="GO:0033862">
    <property type="term" value="F:UMP kinase activity"/>
    <property type="evidence" value="ECO:0007669"/>
    <property type="project" value="UniProtKB-EC"/>
</dbReference>
<dbReference type="GO" id="GO:0044210">
    <property type="term" value="P:'de novo' CTP biosynthetic process"/>
    <property type="evidence" value="ECO:0007669"/>
    <property type="project" value="UniProtKB-UniRule"/>
</dbReference>
<dbReference type="GO" id="GO:0006225">
    <property type="term" value="P:UDP biosynthetic process"/>
    <property type="evidence" value="ECO:0007669"/>
    <property type="project" value="TreeGrafter"/>
</dbReference>
<dbReference type="CDD" id="cd04253">
    <property type="entry name" value="AAK_UMPK-PyrH-Pf"/>
    <property type="match status" value="1"/>
</dbReference>
<dbReference type="FunFam" id="3.40.1160.10:FF:000030">
    <property type="entry name" value="Uridylate kinase"/>
    <property type="match status" value="1"/>
</dbReference>
<dbReference type="Gene3D" id="3.40.1160.10">
    <property type="entry name" value="Acetylglutamate kinase-like"/>
    <property type="match status" value="1"/>
</dbReference>
<dbReference type="HAMAP" id="MF_01220_A">
    <property type="entry name" value="PyrH_A"/>
    <property type="match status" value="1"/>
</dbReference>
<dbReference type="InterPro" id="IPR036393">
    <property type="entry name" value="AceGlu_kinase-like_sf"/>
</dbReference>
<dbReference type="InterPro" id="IPR001048">
    <property type="entry name" value="Asp/Glu/Uridylate_kinase"/>
</dbReference>
<dbReference type="InterPro" id="IPR011817">
    <property type="entry name" value="Uridylate_kinase"/>
</dbReference>
<dbReference type="InterPro" id="IPR011818">
    <property type="entry name" value="Uridylate_kinase_arch/spir"/>
</dbReference>
<dbReference type="NCBIfam" id="TIGR02076">
    <property type="entry name" value="pyrH_arch"/>
    <property type="match status" value="1"/>
</dbReference>
<dbReference type="PANTHER" id="PTHR42833">
    <property type="entry name" value="URIDYLATE KINASE"/>
    <property type="match status" value="1"/>
</dbReference>
<dbReference type="PANTHER" id="PTHR42833:SF4">
    <property type="entry name" value="URIDYLATE KINASE PUMPKIN, CHLOROPLASTIC"/>
    <property type="match status" value="1"/>
</dbReference>
<dbReference type="Pfam" id="PF00696">
    <property type="entry name" value="AA_kinase"/>
    <property type="match status" value="1"/>
</dbReference>
<dbReference type="PIRSF" id="PIRSF005650">
    <property type="entry name" value="Uridylate_kin"/>
    <property type="match status" value="1"/>
</dbReference>
<dbReference type="SUPFAM" id="SSF53633">
    <property type="entry name" value="Carbamate kinase-like"/>
    <property type="match status" value="1"/>
</dbReference>
<comment type="function">
    <text evidence="1">Catalyzes the reversible phosphorylation of UMP to UDP.</text>
</comment>
<comment type="catalytic activity">
    <reaction evidence="1">
        <text>UMP + ATP = UDP + ADP</text>
        <dbReference type="Rhea" id="RHEA:24400"/>
        <dbReference type="ChEBI" id="CHEBI:30616"/>
        <dbReference type="ChEBI" id="CHEBI:57865"/>
        <dbReference type="ChEBI" id="CHEBI:58223"/>
        <dbReference type="ChEBI" id="CHEBI:456216"/>
        <dbReference type="EC" id="2.7.4.22"/>
    </reaction>
</comment>
<comment type="activity regulation">
    <text evidence="1">Inhibited by UTP.</text>
</comment>
<comment type="pathway">
    <text evidence="1">Pyrimidine metabolism; CTP biosynthesis via de novo pathway; UDP from UMP (UMPK route): step 1/1.</text>
</comment>
<comment type="subunit">
    <text evidence="1">Homohexamer.</text>
</comment>
<comment type="subcellular location">
    <subcellularLocation>
        <location evidence="1">Cytoplasm</location>
    </subcellularLocation>
</comment>
<comment type="similarity">
    <text evidence="1">Belongs to the UMP kinase family.</text>
</comment>
<reference key="1">
    <citation type="journal article" date="2009" name="Proc. Natl. Acad. Sci. U.S.A.">
        <title>Biogeography of the Sulfolobus islandicus pan-genome.</title>
        <authorList>
            <person name="Reno M.L."/>
            <person name="Held N.L."/>
            <person name="Fields C.J."/>
            <person name="Burke P.V."/>
            <person name="Whitaker R.J."/>
        </authorList>
    </citation>
    <scope>NUCLEOTIDE SEQUENCE [LARGE SCALE GENOMIC DNA]</scope>
    <source>
        <strain>Y.N.15.51 / Yellowstone #2</strain>
    </source>
</reference>
<name>PYRH_SACI1</name>
<evidence type="ECO:0000255" key="1">
    <source>
        <dbReference type="HAMAP-Rule" id="MF_01220"/>
    </source>
</evidence>
<sequence>MNIILKISGKFFDEDNVNNLIVLRESIRELTDNGFRVGIVTGGGSTARRYIKLAREIGIGEAYLDLLGIWASRLNAYLVMFSLQDLAYMHVPQSLEEFIQDWSHGKVVVTGGFQPGQSTAAVAALVAEASSSKTLVVATNVDGVYEKDPRVYTDVKLIPHLTTQDLRKILEGSQSVQAGTYELLDPLAIKIVERSKIRVVVMNYRKLNRIINILKGEEVSSIIEPT</sequence>
<feature type="chain" id="PRO_1000213958" description="Uridylate kinase">
    <location>
        <begin position="1"/>
        <end position="226"/>
    </location>
</feature>
<feature type="binding site" evidence="1">
    <location>
        <begin position="6"/>
        <end position="10"/>
    </location>
    <ligand>
        <name>ATP</name>
        <dbReference type="ChEBI" id="CHEBI:30616"/>
    </ligand>
</feature>
<feature type="binding site" evidence="1">
    <location>
        <position position="43"/>
    </location>
    <ligand>
        <name>UMP</name>
        <dbReference type="ChEBI" id="CHEBI:57865"/>
    </ligand>
</feature>
<feature type="binding site" evidence="1">
    <location>
        <position position="44"/>
    </location>
    <ligand>
        <name>ATP</name>
        <dbReference type="ChEBI" id="CHEBI:30616"/>
    </ligand>
</feature>
<feature type="binding site" evidence="1">
    <location>
        <position position="48"/>
    </location>
    <ligand>
        <name>ATP</name>
        <dbReference type="ChEBI" id="CHEBI:30616"/>
    </ligand>
</feature>
<feature type="binding site" evidence="1">
    <location>
        <position position="65"/>
    </location>
    <ligand>
        <name>UMP</name>
        <dbReference type="ChEBI" id="CHEBI:57865"/>
    </ligand>
</feature>
<feature type="binding site" evidence="1">
    <location>
        <begin position="113"/>
        <end position="119"/>
    </location>
    <ligand>
        <name>UMP</name>
        <dbReference type="ChEBI" id="CHEBI:57865"/>
    </ligand>
</feature>
<feature type="binding site" evidence="1">
    <location>
        <position position="139"/>
    </location>
    <ligand>
        <name>ATP</name>
        <dbReference type="ChEBI" id="CHEBI:30616"/>
    </ligand>
</feature>
<feature type="binding site" evidence="1">
    <location>
        <position position="140"/>
    </location>
    <ligand>
        <name>ATP</name>
        <dbReference type="ChEBI" id="CHEBI:30616"/>
    </ligand>
</feature>
<feature type="binding site" evidence="1">
    <location>
        <position position="145"/>
    </location>
    <ligand>
        <name>ATP</name>
        <dbReference type="ChEBI" id="CHEBI:30616"/>
    </ligand>
</feature>
<feature type="binding site" evidence="1">
    <location>
        <position position="148"/>
    </location>
    <ligand>
        <name>ATP</name>
        <dbReference type="ChEBI" id="CHEBI:30616"/>
    </ligand>
</feature>
<accession>C3NHU4</accession>
<proteinExistence type="inferred from homology"/>